<protein>
    <recommendedName>
        <fullName evidence="1">Polyphosphate kinase</fullName>
        <ecNumber evidence="1">2.7.4.1</ecNumber>
    </recommendedName>
    <alternativeName>
        <fullName evidence="1">ATP-polyphosphate phosphotransferase</fullName>
    </alternativeName>
    <alternativeName>
        <fullName evidence="1">Polyphosphoric acid kinase</fullName>
    </alternativeName>
</protein>
<feature type="chain" id="PRO_0000128667" description="Polyphosphate kinase">
    <location>
        <begin position="1"/>
        <end position="696"/>
    </location>
</feature>
<feature type="domain" description="PLD phosphodiesterase" evidence="1">
    <location>
        <begin position="428"/>
        <end position="462"/>
    </location>
</feature>
<feature type="active site" description="Phosphohistidine intermediate" evidence="1">
    <location>
        <position position="433"/>
    </location>
</feature>
<feature type="binding site" evidence="1">
    <location>
        <position position="45"/>
    </location>
    <ligand>
        <name>ATP</name>
        <dbReference type="ChEBI" id="CHEBI:30616"/>
    </ligand>
</feature>
<feature type="binding site" evidence="1">
    <location>
        <position position="373"/>
    </location>
    <ligand>
        <name>Mg(2+)</name>
        <dbReference type="ChEBI" id="CHEBI:18420"/>
    </ligand>
</feature>
<feature type="binding site" evidence="1">
    <location>
        <position position="403"/>
    </location>
    <ligand>
        <name>Mg(2+)</name>
        <dbReference type="ChEBI" id="CHEBI:18420"/>
    </ligand>
</feature>
<feature type="binding site" evidence="1">
    <location>
        <position position="466"/>
    </location>
    <ligand>
        <name>ATP</name>
        <dbReference type="ChEBI" id="CHEBI:30616"/>
    </ligand>
</feature>
<feature type="binding site" evidence="1">
    <location>
        <position position="562"/>
    </location>
    <ligand>
        <name>ATP</name>
        <dbReference type="ChEBI" id="CHEBI:30616"/>
    </ligand>
</feature>
<feature type="binding site" evidence="1">
    <location>
        <position position="590"/>
    </location>
    <ligand>
        <name>ATP</name>
        <dbReference type="ChEBI" id="CHEBI:30616"/>
    </ligand>
</feature>
<evidence type="ECO:0000255" key="1">
    <source>
        <dbReference type="HAMAP-Rule" id="MF_00347"/>
    </source>
</evidence>
<gene>
    <name evidence="1" type="primary">ppk</name>
    <name type="ordered locus">VP0573</name>
</gene>
<organism>
    <name type="scientific">Vibrio parahaemolyticus serotype O3:K6 (strain RIMD 2210633)</name>
    <dbReference type="NCBI Taxonomy" id="223926"/>
    <lineage>
        <taxon>Bacteria</taxon>
        <taxon>Pseudomonadati</taxon>
        <taxon>Pseudomonadota</taxon>
        <taxon>Gammaproteobacteria</taxon>
        <taxon>Vibrionales</taxon>
        <taxon>Vibrionaceae</taxon>
        <taxon>Vibrio</taxon>
    </lineage>
</organism>
<sequence>MSAEKLYIEKELSWLSFNERVLQEAADKTVPLIERIRFLGIFSNNLDEFYKVRFADVKRRILINQERGGSDNSKRLLSKMQAKALKLNEQFDELYSELIREMARRRIFLVNEHQLDEAQEKWITKYFRKEVMPHITPLLMKDEIDVLQFLKDEYAYIAVELRKEDHSQYALIEIPTDHLPRFVMVPEQKGKRRKTIILLDNIIRYCLDELFKGFFDYDELAGYAMKMTRDAEYDLRNEIEYSLLEQMSAGVNQRLTAMPVRFVYEREMPQEMLDFLCSKLRISNYDNLIPGGRYHNFKDFIAFPNVGREYLENKPMPPMKCADFEGYANSFEAIKAKDILLYYPYHTFDHIGELVRQASFDPKVLSIKINIYRVAKDSRLMNSLIDAVHNGKNVTVVVELQARFDEEANIEWSKVLTEAGVHVIFGAPGLKIHSKLLMISRREGDDIIRYAHIGTGNFHEKTARIYTDFSLLTADQEITNEVRNVFGYIENPYRPVKFNHLMVSPRNSRTQIYRLIDNEIANAKAGKKAGLTIKVNNLVDKGIVTRLYAASNAGVKINMIIRGMCALVPGIEGVSENIRIISIVDRFLEHPRVVITHNDGDPQVYISSADWMTRNIDHRIEVAAPVRDPRLKQRIIDITNIHFTDTVKARLIDKEMSNSYVPRGNRKKVRSQVAIYDYLKNIEKQTRRQKSDVSDT</sequence>
<accession>Q87S51</accession>
<keyword id="KW-0067">ATP-binding</keyword>
<keyword id="KW-0418">Kinase</keyword>
<keyword id="KW-0460">Magnesium</keyword>
<keyword id="KW-0479">Metal-binding</keyword>
<keyword id="KW-0547">Nucleotide-binding</keyword>
<keyword id="KW-0597">Phosphoprotein</keyword>
<keyword id="KW-0808">Transferase</keyword>
<comment type="function">
    <text evidence="1">Catalyzes the reversible transfer of the terminal phosphate of ATP to form a long-chain polyphosphate (polyP).</text>
</comment>
<comment type="catalytic activity">
    <reaction evidence="1">
        <text>[phosphate](n) + ATP = [phosphate](n+1) + ADP</text>
        <dbReference type="Rhea" id="RHEA:19573"/>
        <dbReference type="Rhea" id="RHEA-COMP:9859"/>
        <dbReference type="Rhea" id="RHEA-COMP:14280"/>
        <dbReference type="ChEBI" id="CHEBI:16838"/>
        <dbReference type="ChEBI" id="CHEBI:30616"/>
        <dbReference type="ChEBI" id="CHEBI:456216"/>
        <dbReference type="EC" id="2.7.4.1"/>
    </reaction>
</comment>
<comment type="cofactor">
    <cofactor evidence="1">
        <name>Mg(2+)</name>
        <dbReference type="ChEBI" id="CHEBI:18420"/>
    </cofactor>
</comment>
<comment type="PTM">
    <text evidence="1">An intermediate of this reaction is the autophosphorylated ppk in which a phosphate is covalently linked to a histidine residue through a N-P bond.</text>
</comment>
<comment type="similarity">
    <text evidence="1">Belongs to the polyphosphate kinase 1 (PPK1) family.</text>
</comment>
<reference key="1">
    <citation type="journal article" date="2003" name="Lancet">
        <title>Genome sequence of Vibrio parahaemolyticus: a pathogenic mechanism distinct from that of V. cholerae.</title>
        <authorList>
            <person name="Makino K."/>
            <person name="Oshima K."/>
            <person name="Kurokawa K."/>
            <person name="Yokoyama K."/>
            <person name="Uda T."/>
            <person name="Tagomori K."/>
            <person name="Iijima Y."/>
            <person name="Najima M."/>
            <person name="Nakano M."/>
            <person name="Yamashita A."/>
            <person name="Kubota Y."/>
            <person name="Kimura S."/>
            <person name="Yasunaga T."/>
            <person name="Honda T."/>
            <person name="Shinagawa H."/>
            <person name="Hattori M."/>
            <person name="Iida T."/>
        </authorList>
    </citation>
    <scope>NUCLEOTIDE SEQUENCE [LARGE SCALE GENOMIC DNA]</scope>
    <source>
        <strain>RIMD 2210633</strain>
    </source>
</reference>
<dbReference type="EC" id="2.7.4.1" evidence="1"/>
<dbReference type="EMBL" id="BA000031">
    <property type="protein sequence ID" value="BAC58836.1"/>
    <property type="molecule type" value="Genomic_DNA"/>
</dbReference>
<dbReference type="RefSeq" id="NP_796952.1">
    <property type="nucleotide sequence ID" value="NC_004603.1"/>
</dbReference>
<dbReference type="SMR" id="Q87S51"/>
<dbReference type="GeneID" id="1188048"/>
<dbReference type="KEGG" id="vpa:VP0573"/>
<dbReference type="PATRIC" id="fig|223926.6.peg.544"/>
<dbReference type="eggNOG" id="COG0855">
    <property type="taxonomic scope" value="Bacteria"/>
</dbReference>
<dbReference type="HOGENOM" id="CLU_009678_6_1_6"/>
<dbReference type="Proteomes" id="UP000002493">
    <property type="component" value="Chromosome 1"/>
</dbReference>
<dbReference type="GO" id="GO:0009358">
    <property type="term" value="C:polyphosphate kinase complex"/>
    <property type="evidence" value="ECO:0007669"/>
    <property type="project" value="InterPro"/>
</dbReference>
<dbReference type="GO" id="GO:0005524">
    <property type="term" value="F:ATP binding"/>
    <property type="evidence" value="ECO:0007669"/>
    <property type="project" value="UniProtKB-KW"/>
</dbReference>
<dbReference type="GO" id="GO:0046872">
    <property type="term" value="F:metal ion binding"/>
    <property type="evidence" value="ECO:0007669"/>
    <property type="project" value="UniProtKB-KW"/>
</dbReference>
<dbReference type="GO" id="GO:0008976">
    <property type="term" value="F:polyphosphate kinase activity"/>
    <property type="evidence" value="ECO:0007669"/>
    <property type="project" value="UniProtKB-UniRule"/>
</dbReference>
<dbReference type="GO" id="GO:0006799">
    <property type="term" value="P:polyphosphate biosynthetic process"/>
    <property type="evidence" value="ECO:0007669"/>
    <property type="project" value="UniProtKB-UniRule"/>
</dbReference>
<dbReference type="CDD" id="cd09164">
    <property type="entry name" value="PLDc_EcPPK1_C1_like"/>
    <property type="match status" value="1"/>
</dbReference>
<dbReference type="CDD" id="cd09167">
    <property type="entry name" value="PLDc_EcPPK1_C2_like"/>
    <property type="match status" value="1"/>
</dbReference>
<dbReference type="FunFam" id="3.30.870.10:FF:000001">
    <property type="entry name" value="Polyphosphate kinase"/>
    <property type="match status" value="1"/>
</dbReference>
<dbReference type="Gene3D" id="3.30.870.10">
    <property type="entry name" value="Endonuclease Chain A"/>
    <property type="match status" value="2"/>
</dbReference>
<dbReference type="Gene3D" id="3.30.1840.10">
    <property type="entry name" value="Polyphosphate kinase middle domain"/>
    <property type="match status" value="1"/>
</dbReference>
<dbReference type="Gene3D" id="1.20.58.310">
    <property type="entry name" value="Polyphosphate kinase N-terminal domain"/>
    <property type="match status" value="1"/>
</dbReference>
<dbReference type="HAMAP" id="MF_00347">
    <property type="entry name" value="Polyphosphate_kinase"/>
    <property type="match status" value="1"/>
</dbReference>
<dbReference type="InterPro" id="IPR001736">
    <property type="entry name" value="PLipase_D/transphosphatidylase"/>
</dbReference>
<dbReference type="InterPro" id="IPR003414">
    <property type="entry name" value="PP_kinase"/>
</dbReference>
<dbReference type="InterPro" id="IPR041108">
    <property type="entry name" value="PP_kinase_C_1"/>
</dbReference>
<dbReference type="InterPro" id="IPR024953">
    <property type="entry name" value="PP_kinase_middle"/>
</dbReference>
<dbReference type="InterPro" id="IPR036830">
    <property type="entry name" value="PP_kinase_middle_dom_sf"/>
</dbReference>
<dbReference type="InterPro" id="IPR025200">
    <property type="entry name" value="PPK_C_dom2"/>
</dbReference>
<dbReference type="InterPro" id="IPR025198">
    <property type="entry name" value="PPK_N_dom"/>
</dbReference>
<dbReference type="InterPro" id="IPR036832">
    <property type="entry name" value="PPK_N_dom_sf"/>
</dbReference>
<dbReference type="NCBIfam" id="TIGR03705">
    <property type="entry name" value="poly_P_kin"/>
    <property type="match status" value="1"/>
</dbReference>
<dbReference type="NCBIfam" id="NF003917">
    <property type="entry name" value="PRK05443.1-1"/>
    <property type="match status" value="1"/>
</dbReference>
<dbReference type="PANTHER" id="PTHR30218">
    <property type="entry name" value="POLYPHOSPHATE KINASE"/>
    <property type="match status" value="1"/>
</dbReference>
<dbReference type="PANTHER" id="PTHR30218:SF0">
    <property type="entry name" value="POLYPHOSPHATE KINASE"/>
    <property type="match status" value="1"/>
</dbReference>
<dbReference type="Pfam" id="PF02503">
    <property type="entry name" value="PP_kinase"/>
    <property type="match status" value="1"/>
</dbReference>
<dbReference type="Pfam" id="PF13090">
    <property type="entry name" value="PP_kinase_C"/>
    <property type="match status" value="1"/>
</dbReference>
<dbReference type="Pfam" id="PF17941">
    <property type="entry name" value="PP_kinase_C_1"/>
    <property type="match status" value="1"/>
</dbReference>
<dbReference type="Pfam" id="PF13089">
    <property type="entry name" value="PP_kinase_N"/>
    <property type="match status" value="1"/>
</dbReference>
<dbReference type="PIRSF" id="PIRSF015589">
    <property type="entry name" value="PP_kinase"/>
    <property type="match status" value="1"/>
</dbReference>
<dbReference type="SUPFAM" id="SSF56024">
    <property type="entry name" value="Phospholipase D/nuclease"/>
    <property type="match status" value="2"/>
</dbReference>
<dbReference type="SUPFAM" id="SSF143724">
    <property type="entry name" value="PHP14-like"/>
    <property type="match status" value="1"/>
</dbReference>
<dbReference type="SUPFAM" id="SSF140356">
    <property type="entry name" value="PPK N-terminal domain-like"/>
    <property type="match status" value="1"/>
</dbReference>
<dbReference type="PROSITE" id="PS50035">
    <property type="entry name" value="PLD"/>
    <property type="match status" value="1"/>
</dbReference>
<proteinExistence type="inferred from homology"/>
<name>PPK1_VIBPA</name>